<reference key="1">
    <citation type="journal article" date="2010" name="PLoS ONE">
        <title>Genome sequence of Cronobacter sakazakii BAA-894 and comparative genomic hybridization analysis with other Cronobacter species.</title>
        <authorList>
            <person name="Kucerova E."/>
            <person name="Clifton S.W."/>
            <person name="Xia X.Q."/>
            <person name="Long F."/>
            <person name="Porwollik S."/>
            <person name="Fulton L."/>
            <person name="Fronick C."/>
            <person name="Minx P."/>
            <person name="Kyung K."/>
            <person name="Warren W."/>
            <person name="Fulton R."/>
            <person name="Feng D."/>
            <person name="Wollam A."/>
            <person name="Shah N."/>
            <person name="Bhonagiri V."/>
            <person name="Nash W.E."/>
            <person name="Hallsworth-Pepin K."/>
            <person name="Wilson R.K."/>
            <person name="McClelland M."/>
            <person name="Forsythe S.J."/>
        </authorList>
    </citation>
    <scope>NUCLEOTIDE SEQUENCE [LARGE SCALE GENOMIC DNA]</scope>
    <source>
        <strain>ATCC BAA-894</strain>
    </source>
</reference>
<organism>
    <name type="scientific">Cronobacter sakazakii (strain ATCC BAA-894)</name>
    <name type="common">Enterobacter sakazakii</name>
    <dbReference type="NCBI Taxonomy" id="290339"/>
    <lineage>
        <taxon>Bacteria</taxon>
        <taxon>Pseudomonadati</taxon>
        <taxon>Pseudomonadota</taxon>
        <taxon>Gammaproteobacteria</taxon>
        <taxon>Enterobacterales</taxon>
        <taxon>Enterobacteriaceae</taxon>
        <taxon>Cronobacter</taxon>
    </lineage>
</organism>
<name>LEUC_CROS8</name>
<gene>
    <name evidence="1" type="primary">leuC</name>
    <name type="ordered locus">ESA_03266</name>
</gene>
<evidence type="ECO:0000255" key="1">
    <source>
        <dbReference type="HAMAP-Rule" id="MF_01026"/>
    </source>
</evidence>
<feature type="chain" id="PRO_1000063554" description="3-isopropylmalate dehydratase large subunit">
    <location>
        <begin position="1"/>
        <end position="466"/>
    </location>
</feature>
<feature type="binding site" evidence="1">
    <location>
        <position position="347"/>
    </location>
    <ligand>
        <name>[4Fe-4S] cluster</name>
        <dbReference type="ChEBI" id="CHEBI:49883"/>
    </ligand>
</feature>
<feature type="binding site" evidence="1">
    <location>
        <position position="407"/>
    </location>
    <ligand>
        <name>[4Fe-4S] cluster</name>
        <dbReference type="ChEBI" id="CHEBI:49883"/>
    </ligand>
</feature>
<feature type="binding site" evidence="1">
    <location>
        <position position="410"/>
    </location>
    <ligand>
        <name>[4Fe-4S] cluster</name>
        <dbReference type="ChEBI" id="CHEBI:49883"/>
    </ligand>
</feature>
<proteinExistence type="inferred from homology"/>
<protein>
    <recommendedName>
        <fullName evidence="1">3-isopropylmalate dehydratase large subunit</fullName>
        <ecNumber evidence="1">4.2.1.33</ecNumber>
    </recommendedName>
    <alternativeName>
        <fullName evidence="1">Alpha-IPM isomerase</fullName>
        <shortName evidence="1">IPMI</shortName>
    </alternativeName>
    <alternativeName>
        <fullName evidence="1">Isopropylmalate isomerase</fullName>
    </alternativeName>
</protein>
<comment type="function">
    <text evidence="1">Catalyzes the isomerization between 2-isopropylmalate and 3-isopropylmalate, via the formation of 2-isopropylmaleate.</text>
</comment>
<comment type="catalytic activity">
    <reaction evidence="1">
        <text>(2R,3S)-3-isopropylmalate = (2S)-2-isopropylmalate</text>
        <dbReference type="Rhea" id="RHEA:32287"/>
        <dbReference type="ChEBI" id="CHEBI:1178"/>
        <dbReference type="ChEBI" id="CHEBI:35121"/>
        <dbReference type="EC" id="4.2.1.33"/>
    </reaction>
</comment>
<comment type="cofactor">
    <cofactor evidence="1">
        <name>[4Fe-4S] cluster</name>
        <dbReference type="ChEBI" id="CHEBI:49883"/>
    </cofactor>
    <text evidence="1">Binds 1 [4Fe-4S] cluster per subunit.</text>
</comment>
<comment type="pathway">
    <text evidence="1">Amino-acid biosynthesis; L-leucine biosynthesis; L-leucine from 3-methyl-2-oxobutanoate: step 2/4.</text>
</comment>
<comment type="subunit">
    <text evidence="1">Heterodimer of LeuC and LeuD.</text>
</comment>
<comment type="similarity">
    <text evidence="1">Belongs to the aconitase/IPM isomerase family. LeuC type 1 subfamily.</text>
</comment>
<keyword id="KW-0004">4Fe-4S</keyword>
<keyword id="KW-0028">Amino-acid biosynthesis</keyword>
<keyword id="KW-0100">Branched-chain amino acid biosynthesis</keyword>
<keyword id="KW-0408">Iron</keyword>
<keyword id="KW-0411">Iron-sulfur</keyword>
<keyword id="KW-0432">Leucine biosynthesis</keyword>
<keyword id="KW-0456">Lyase</keyword>
<keyword id="KW-0479">Metal-binding</keyword>
<keyword id="KW-1185">Reference proteome</keyword>
<sequence>MAKTLYQKLFDAHVVHEAPNETPLLYIDRHLVHEVTSPQAFDGLRAHGRPVRQPRKTFATMDHNVSTQTKDINASGEMARIQMQELIKNCNEFGVELYDLNHPYQGIVHVMGPEQGITLPGMTIVCGDSHTATHGAFGALAFGIGTSEVEHVLATQTLKQGRAKTMKIEVNGRAAPGITAKDIVLAIIGKTGSAGGTGYVVEFCGDAIRALSMEGRMTLCNMAIEMGAKAGLVAPDETTFNYVKGRLHAPKGQDFDEAVAYWKTLKTDDGAQFDAVVTLNAEEIAPQVTWGTNPGQVIAVSDAIPDPASFADPVERASAEKALAYMGLKPGVPLTDVAIDKVFIGSCTNSRIEDLRAAAEIARGRKVAPGVQALVVPGSGPVKAQAEAEGLDKIFIEAGFEWRLPGCSMCLAMNNDRLNPGERCASTSNRNFEGRQGRGGRTHLVSPAMAAAAAVTGRFADIRSLK</sequence>
<accession>A7MIC7</accession>
<dbReference type="EC" id="4.2.1.33" evidence="1"/>
<dbReference type="EMBL" id="CP000783">
    <property type="protein sequence ID" value="ABU78488.1"/>
    <property type="molecule type" value="Genomic_DNA"/>
</dbReference>
<dbReference type="RefSeq" id="WP_007783795.1">
    <property type="nucleotide sequence ID" value="NC_009778.1"/>
</dbReference>
<dbReference type="SMR" id="A7MIC7"/>
<dbReference type="GeneID" id="56731951"/>
<dbReference type="KEGG" id="esa:ESA_03266"/>
<dbReference type="HOGENOM" id="CLU_006714_3_4_6"/>
<dbReference type="UniPathway" id="UPA00048">
    <property type="reaction ID" value="UER00071"/>
</dbReference>
<dbReference type="Proteomes" id="UP000000260">
    <property type="component" value="Chromosome"/>
</dbReference>
<dbReference type="GO" id="GO:0003861">
    <property type="term" value="F:3-isopropylmalate dehydratase activity"/>
    <property type="evidence" value="ECO:0007669"/>
    <property type="project" value="UniProtKB-UniRule"/>
</dbReference>
<dbReference type="GO" id="GO:0051539">
    <property type="term" value="F:4 iron, 4 sulfur cluster binding"/>
    <property type="evidence" value="ECO:0007669"/>
    <property type="project" value="UniProtKB-KW"/>
</dbReference>
<dbReference type="GO" id="GO:0046872">
    <property type="term" value="F:metal ion binding"/>
    <property type="evidence" value="ECO:0007669"/>
    <property type="project" value="UniProtKB-KW"/>
</dbReference>
<dbReference type="GO" id="GO:0009098">
    <property type="term" value="P:L-leucine biosynthetic process"/>
    <property type="evidence" value="ECO:0007669"/>
    <property type="project" value="UniProtKB-UniRule"/>
</dbReference>
<dbReference type="CDD" id="cd01583">
    <property type="entry name" value="IPMI"/>
    <property type="match status" value="1"/>
</dbReference>
<dbReference type="FunFam" id="3.30.499.10:FF:000006">
    <property type="entry name" value="3-isopropylmalate dehydratase large subunit"/>
    <property type="match status" value="1"/>
</dbReference>
<dbReference type="FunFam" id="3.30.499.10:FF:000007">
    <property type="entry name" value="3-isopropylmalate dehydratase large subunit"/>
    <property type="match status" value="1"/>
</dbReference>
<dbReference type="Gene3D" id="3.30.499.10">
    <property type="entry name" value="Aconitase, domain 3"/>
    <property type="match status" value="2"/>
</dbReference>
<dbReference type="HAMAP" id="MF_01026">
    <property type="entry name" value="LeuC_type1"/>
    <property type="match status" value="1"/>
</dbReference>
<dbReference type="InterPro" id="IPR004430">
    <property type="entry name" value="3-IsopropMal_deHydase_lsu"/>
</dbReference>
<dbReference type="InterPro" id="IPR015931">
    <property type="entry name" value="Acnase/IPM_dHydase_lsu_aba_1/3"/>
</dbReference>
<dbReference type="InterPro" id="IPR001030">
    <property type="entry name" value="Acoase/IPM_deHydtase_lsu_aba"/>
</dbReference>
<dbReference type="InterPro" id="IPR018136">
    <property type="entry name" value="Aconitase_4Fe-4S_BS"/>
</dbReference>
<dbReference type="InterPro" id="IPR036008">
    <property type="entry name" value="Aconitase_4Fe-4S_dom"/>
</dbReference>
<dbReference type="InterPro" id="IPR050067">
    <property type="entry name" value="IPM_dehydratase_rel_enz"/>
</dbReference>
<dbReference type="InterPro" id="IPR033941">
    <property type="entry name" value="IPMI_cat"/>
</dbReference>
<dbReference type="NCBIfam" id="TIGR00170">
    <property type="entry name" value="leuC"/>
    <property type="match status" value="1"/>
</dbReference>
<dbReference type="NCBIfam" id="NF004016">
    <property type="entry name" value="PRK05478.1"/>
    <property type="match status" value="1"/>
</dbReference>
<dbReference type="NCBIfam" id="NF009116">
    <property type="entry name" value="PRK12466.1"/>
    <property type="match status" value="1"/>
</dbReference>
<dbReference type="PANTHER" id="PTHR43822:SF9">
    <property type="entry name" value="3-ISOPROPYLMALATE DEHYDRATASE"/>
    <property type="match status" value="1"/>
</dbReference>
<dbReference type="PANTHER" id="PTHR43822">
    <property type="entry name" value="HOMOACONITASE, MITOCHONDRIAL-RELATED"/>
    <property type="match status" value="1"/>
</dbReference>
<dbReference type="Pfam" id="PF00330">
    <property type="entry name" value="Aconitase"/>
    <property type="match status" value="1"/>
</dbReference>
<dbReference type="PRINTS" id="PR00415">
    <property type="entry name" value="ACONITASE"/>
</dbReference>
<dbReference type="SUPFAM" id="SSF53732">
    <property type="entry name" value="Aconitase iron-sulfur domain"/>
    <property type="match status" value="1"/>
</dbReference>
<dbReference type="PROSITE" id="PS00450">
    <property type="entry name" value="ACONITASE_1"/>
    <property type="match status" value="1"/>
</dbReference>
<dbReference type="PROSITE" id="PS01244">
    <property type="entry name" value="ACONITASE_2"/>
    <property type="match status" value="1"/>
</dbReference>